<feature type="chain" id="PRO_0000240989" description="S-adenosylmethionine synthase">
    <location>
        <begin position="1"/>
        <end position="411"/>
    </location>
</feature>
<feature type="region of interest" description="Flexible loop" evidence="1">
    <location>
        <begin position="99"/>
        <end position="109"/>
    </location>
</feature>
<feature type="binding site" description="in other chain" evidence="1">
    <location>
        <position position="15"/>
    </location>
    <ligand>
        <name>ATP</name>
        <dbReference type="ChEBI" id="CHEBI:30616"/>
        <note>ligand shared between two neighboring subunits</note>
    </ligand>
</feature>
<feature type="binding site" evidence="1">
    <location>
        <position position="17"/>
    </location>
    <ligand>
        <name>Mg(2+)</name>
        <dbReference type="ChEBI" id="CHEBI:18420"/>
    </ligand>
</feature>
<feature type="binding site" evidence="1">
    <location>
        <position position="43"/>
    </location>
    <ligand>
        <name>K(+)</name>
        <dbReference type="ChEBI" id="CHEBI:29103"/>
    </ligand>
</feature>
<feature type="binding site" description="in other chain" evidence="1">
    <location>
        <position position="56"/>
    </location>
    <ligand>
        <name>L-methionine</name>
        <dbReference type="ChEBI" id="CHEBI:57844"/>
        <note>ligand shared between two neighboring subunits</note>
    </ligand>
</feature>
<feature type="binding site" description="in other chain" evidence="1">
    <location>
        <position position="99"/>
    </location>
    <ligand>
        <name>L-methionine</name>
        <dbReference type="ChEBI" id="CHEBI:57844"/>
        <note>ligand shared between two neighboring subunits</note>
    </ligand>
</feature>
<feature type="binding site" description="in other chain" evidence="1">
    <location>
        <begin position="179"/>
        <end position="181"/>
    </location>
    <ligand>
        <name>ATP</name>
        <dbReference type="ChEBI" id="CHEBI:30616"/>
        <note>ligand shared between two neighboring subunits</note>
    </ligand>
</feature>
<feature type="binding site" evidence="1">
    <location>
        <position position="260"/>
    </location>
    <ligand>
        <name>ATP</name>
        <dbReference type="ChEBI" id="CHEBI:30616"/>
        <note>ligand shared between two neighboring subunits</note>
    </ligand>
</feature>
<feature type="binding site" evidence="1">
    <location>
        <position position="260"/>
    </location>
    <ligand>
        <name>L-methionine</name>
        <dbReference type="ChEBI" id="CHEBI:57844"/>
        <note>ligand shared between two neighboring subunits</note>
    </ligand>
</feature>
<feature type="binding site" description="in other chain" evidence="1">
    <location>
        <begin position="266"/>
        <end position="267"/>
    </location>
    <ligand>
        <name>ATP</name>
        <dbReference type="ChEBI" id="CHEBI:30616"/>
        <note>ligand shared between two neighboring subunits</note>
    </ligand>
</feature>
<feature type="binding site" evidence="1">
    <location>
        <position position="283"/>
    </location>
    <ligand>
        <name>ATP</name>
        <dbReference type="ChEBI" id="CHEBI:30616"/>
        <note>ligand shared between two neighboring subunits</note>
    </ligand>
</feature>
<feature type="binding site" evidence="1">
    <location>
        <position position="287"/>
    </location>
    <ligand>
        <name>ATP</name>
        <dbReference type="ChEBI" id="CHEBI:30616"/>
        <note>ligand shared between two neighboring subunits</note>
    </ligand>
</feature>
<feature type="binding site" description="in other chain" evidence="1">
    <location>
        <position position="291"/>
    </location>
    <ligand>
        <name>L-methionine</name>
        <dbReference type="ChEBI" id="CHEBI:57844"/>
        <note>ligand shared between two neighboring subunits</note>
    </ligand>
</feature>
<name>METK_CORJK</name>
<keyword id="KW-0067">ATP-binding</keyword>
<keyword id="KW-0963">Cytoplasm</keyword>
<keyword id="KW-0460">Magnesium</keyword>
<keyword id="KW-0479">Metal-binding</keyword>
<keyword id="KW-0547">Nucleotide-binding</keyword>
<keyword id="KW-0554">One-carbon metabolism</keyword>
<keyword id="KW-0630">Potassium</keyword>
<keyword id="KW-1185">Reference proteome</keyword>
<keyword id="KW-0808">Transferase</keyword>
<sequence>MSLRLFSSESVTEGHPDKICDAISDKILDALIAKDPEARVAVETVVTTGLVHVVGEIRTTTYVEIPALVRKTLLEIGFNSSDMGFDGSTCGVSVAIGEQSQEIAQGVDTALEHRSHDAEGGAELDEIDRLGAGDQGLMFGYATNETPEYMPLPIALAHRLSRRLTEVRKKGIVPHLRPDGKTQVTFAYDAEGAPVRLDTVVVSTQHDAGIEQEWLHEQIRTHVVQHVLDEAGLSGNLADTDYTLLVNPSGSFVLGGPMGDAGLTGRKIIVDTYGGMARHGGGAFSGKDPSKVDRSGAYAMRWVAKNIVAAGLADRAEVQVAYAIGRATPVGLYVETFGTEKAPVEAIQAAVRQVFDLRPAAILQELDLKRPIYAQTSAYGHFGRTDLDLPWERTDRVEALQKAVAAAQQSQ</sequence>
<gene>
    <name evidence="1" type="primary">metK</name>
    <name type="ordered locus">jk1016</name>
</gene>
<protein>
    <recommendedName>
        <fullName evidence="1">S-adenosylmethionine synthase</fullName>
        <shortName evidence="1">AdoMet synthase</shortName>
        <ecNumber evidence="1">2.5.1.6</ecNumber>
    </recommendedName>
    <alternativeName>
        <fullName evidence="1">MAT</fullName>
    </alternativeName>
    <alternativeName>
        <fullName evidence="1">Methionine adenosyltransferase</fullName>
    </alternativeName>
</protein>
<dbReference type="EC" id="2.5.1.6" evidence="1"/>
<dbReference type="EMBL" id="CR931997">
    <property type="protein sequence ID" value="CAI37180.1"/>
    <property type="molecule type" value="Genomic_DNA"/>
</dbReference>
<dbReference type="RefSeq" id="WP_011273588.1">
    <property type="nucleotide sequence ID" value="NC_007164.1"/>
</dbReference>
<dbReference type="SMR" id="Q4JVH7"/>
<dbReference type="STRING" id="306537.jk1016"/>
<dbReference type="GeneID" id="92738530"/>
<dbReference type="KEGG" id="cjk:jk1016"/>
<dbReference type="PATRIC" id="fig|306537.10.peg.1028"/>
<dbReference type="eggNOG" id="COG0192">
    <property type="taxonomic scope" value="Bacteria"/>
</dbReference>
<dbReference type="HOGENOM" id="CLU_041802_1_1_11"/>
<dbReference type="OrthoDB" id="9801686at2"/>
<dbReference type="UniPathway" id="UPA00315">
    <property type="reaction ID" value="UER00080"/>
</dbReference>
<dbReference type="Proteomes" id="UP000000545">
    <property type="component" value="Chromosome"/>
</dbReference>
<dbReference type="GO" id="GO:0005737">
    <property type="term" value="C:cytoplasm"/>
    <property type="evidence" value="ECO:0007669"/>
    <property type="project" value="UniProtKB-SubCell"/>
</dbReference>
<dbReference type="GO" id="GO:0005524">
    <property type="term" value="F:ATP binding"/>
    <property type="evidence" value="ECO:0007669"/>
    <property type="project" value="UniProtKB-UniRule"/>
</dbReference>
<dbReference type="GO" id="GO:0000287">
    <property type="term" value="F:magnesium ion binding"/>
    <property type="evidence" value="ECO:0007669"/>
    <property type="project" value="UniProtKB-UniRule"/>
</dbReference>
<dbReference type="GO" id="GO:0004478">
    <property type="term" value="F:methionine adenosyltransferase activity"/>
    <property type="evidence" value="ECO:0007669"/>
    <property type="project" value="UniProtKB-UniRule"/>
</dbReference>
<dbReference type="GO" id="GO:0006730">
    <property type="term" value="P:one-carbon metabolic process"/>
    <property type="evidence" value="ECO:0007669"/>
    <property type="project" value="UniProtKB-KW"/>
</dbReference>
<dbReference type="GO" id="GO:0006556">
    <property type="term" value="P:S-adenosylmethionine biosynthetic process"/>
    <property type="evidence" value="ECO:0007669"/>
    <property type="project" value="UniProtKB-UniRule"/>
</dbReference>
<dbReference type="CDD" id="cd18079">
    <property type="entry name" value="S-AdoMet_synt"/>
    <property type="match status" value="1"/>
</dbReference>
<dbReference type="FunFam" id="3.30.300.10:FF:000003">
    <property type="entry name" value="S-adenosylmethionine synthase"/>
    <property type="match status" value="1"/>
</dbReference>
<dbReference type="Gene3D" id="3.30.300.10">
    <property type="match status" value="3"/>
</dbReference>
<dbReference type="HAMAP" id="MF_00086">
    <property type="entry name" value="S_AdoMet_synth1"/>
    <property type="match status" value="1"/>
</dbReference>
<dbReference type="InterPro" id="IPR022631">
    <property type="entry name" value="ADOMET_SYNTHASE_CS"/>
</dbReference>
<dbReference type="InterPro" id="IPR022630">
    <property type="entry name" value="S-AdoMet_synt_C"/>
</dbReference>
<dbReference type="InterPro" id="IPR022629">
    <property type="entry name" value="S-AdoMet_synt_central"/>
</dbReference>
<dbReference type="InterPro" id="IPR022628">
    <property type="entry name" value="S-AdoMet_synt_N"/>
</dbReference>
<dbReference type="InterPro" id="IPR002133">
    <property type="entry name" value="S-AdoMet_synthetase"/>
</dbReference>
<dbReference type="InterPro" id="IPR022636">
    <property type="entry name" value="S-AdoMet_synthetase_sfam"/>
</dbReference>
<dbReference type="NCBIfam" id="TIGR01034">
    <property type="entry name" value="metK"/>
    <property type="match status" value="1"/>
</dbReference>
<dbReference type="PANTHER" id="PTHR11964">
    <property type="entry name" value="S-ADENOSYLMETHIONINE SYNTHETASE"/>
    <property type="match status" value="1"/>
</dbReference>
<dbReference type="Pfam" id="PF02773">
    <property type="entry name" value="S-AdoMet_synt_C"/>
    <property type="match status" value="1"/>
</dbReference>
<dbReference type="Pfam" id="PF02772">
    <property type="entry name" value="S-AdoMet_synt_M"/>
    <property type="match status" value="1"/>
</dbReference>
<dbReference type="Pfam" id="PF00438">
    <property type="entry name" value="S-AdoMet_synt_N"/>
    <property type="match status" value="1"/>
</dbReference>
<dbReference type="PIRSF" id="PIRSF000497">
    <property type="entry name" value="MAT"/>
    <property type="match status" value="1"/>
</dbReference>
<dbReference type="SUPFAM" id="SSF55973">
    <property type="entry name" value="S-adenosylmethionine synthetase"/>
    <property type="match status" value="3"/>
</dbReference>
<dbReference type="PROSITE" id="PS00376">
    <property type="entry name" value="ADOMET_SYNTHASE_1"/>
    <property type="match status" value="1"/>
</dbReference>
<dbReference type="PROSITE" id="PS00377">
    <property type="entry name" value="ADOMET_SYNTHASE_2"/>
    <property type="match status" value="1"/>
</dbReference>
<accession>Q4JVH7</accession>
<organism>
    <name type="scientific">Corynebacterium jeikeium (strain K411)</name>
    <dbReference type="NCBI Taxonomy" id="306537"/>
    <lineage>
        <taxon>Bacteria</taxon>
        <taxon>Bacillati</taxon>
        <taxon>Actinomycetota</taxon>
        <taxon>Actinomycetes</taxon>
        <taxon>Mycobacteriales</taxon>
        <taxon>Corynebacteriaceae</taxon>
        <taxon>Corynebacterium</taxon>
    </lineage>
</organism>
<proteinExistence type="inferred from homology"/>
<evidence type="ECO:0000255" key="1">
    <source>
        <dbReference type="HAMAP-Rule" id="MF_00086"/>
    </source>
</evidence>
<reference key="1">
    <citation type="journal article" date="2005" name="J. Bacteriol.">
        <title>Complete genome sequence and analysis of the multiresistant nosocomial pathogen Corynebacterium jeikeium K411, a lipid-requiring bacterium of the human skin flora.</title>
        <authorList>
            <person name="Tauch A."/>
            <person name="Kaiser O."/>
            <person name="Hain T."/>
            <person name="Goesmann A."/>
            <person name="Weisshaar B."/>
            <person name="Albersmeier A."/>
            <person name="Bekel T."/>
            <person name="Bischoff N."/>
            <person name="Brune I."/>
            <person name="Chakraborty T."/>
            <person name="Kalinowski J."/>
            <person name="Meyer F."/>
            <person name="Rupp O."/>
            <person name="Schneiker S."/>
            <person name="Viehoever P."/>
            <person name="Puehler A."/>
        </authorList>
    </citation>
    <scope>NUCLEOTIDE SEQUENCE [LARGE SCALE GENOMIC DNA]</scope>
    <source>
        <strain>K411</strain>
    </source>
</reference>
<comment type="function">
    <text evidence="1">Catalyzes the formation of S-adenosylmethionine (AdoMet) from methionine and ATP. The overall synthetic reaction is composed of two sequential steps, AdoMet formation and the subsequent tripolyphosphate hydrolysis which occurs prior to release of AdoMet from the enzyme.</text>
</comment>
<comment type="catalytic activity">
    <reaction evidence="1">
        <text>L-methionine + ATP + H2O = S-adenosyl-L-methionine + phosphate + diphosphate</text>
        <dbReference type="Rhea" id="RHEA:21080"/>
        <dbReference type="ChEBI" id="CHEBI:15377"/>
        <dbReference type="ChEBI" id="CHEBI:30616"/>
        <dbReference type="ChEBI" id="CHEBI:33019"/>
        <dbReference type="ChEBI" id="CHEBI:43474"/>
        <dbReference type="ChEBI" id="CHEBI:57844"/>
        <dbReference type="ChEBI" id="CHEBI:59789"/>
        <dbReference type="EC" id="2.5.1.6"/>
    </reaction>
</comment>
<comment type="cofactor">
    <cofactor evidence="1">
        <name>Mg(2+)</name>
        <dbReference type="ChEBI" id="CHEBI:18420"/>
    </cofactor>
    <text evidence="1">Binds 2 divalent ions per subunit.</text>
</comment>
<comment type="cofactor">
    <cofactor evidence="1">
        <name>K(+)</name>
        <dbReference type="ChEBI" id="CHEBI:29103"/>
    </cofactor>
    <text evidence="1">Binds 1 potassium ion per subunit.</text>
</comment>
<comment type="pathway">
    <text evidence="1">Amino-acid biosynthesis; S-adenosyl-L-methionine biosynthesis; S-adenosyl-L-methionine from L-methionine: step 1/1.</text>
</comment>
<comment type="subunit">
    <text evidence="1">Homotetramer; dimer of dimers.</text>
</comment>
<comment type="subcellular location">
    <subcellularLocation>
        <location evidence="1">Cytoplasm</location>
    </subcellularLocation>
</comment>
<comment type="similarity">
    <text evidence="1">Belongs to the AdoMet synthase family.</text>
</comment>